<organism evidence="8">
    <name type="scientific">Mus musculus</name>
    <name type="common">Mouse</name>
    <dbReference type="NCBI Taxonomy" id="10090"/>
    <lineage>
        <taxon>Eukaryota</taxon>
        <taxon>Metazoa</taxon>
        <taxon>Chordata</taxon>
        <taxon>Craniata</taxon>
        <taxon>Vertebrata</taxon>
        <taxon>Euteleostomi</taxon>
        <taxon>Mammalia</taxon>
        <taxon>Eutheria</taxon>
        <taxon>Euarchontoglires</taxon>
        <taxon>Glires</taxon>
        <taxon>Rodentia</taxon>
        <taxon>Myomorpha</taxon>
        <taxon>Muroidea</taxon>
        <taxon>Muridae</taxon>
        <taxon>Murinae</taxon>
        <taxon>Mus</taxon>
        <taxon>Mus</taxon>
    </lineage>
</organism>
<name>OAS1C_MOUSE</name>
<sequence length="362" mass="42912">MENGLCSIQARELDEFICDYLFPDTTFLTELRADIDSISAFLKERCFQGAAHPVRVSRVVMGGSYDEHTALKGKSEAKMVLFFNNLTSFEEQLKRRGEFVEEIQKHLCQLQQEKPFKVKFEVQSSEEPNSRSLSFKLSSPELQQEVEFDVQPAYDVLYELRNNTYAEPQFYNKVYAQLIHECTTLEKEGDFSICFTDLHQNFMRYRAPKLWNLIRLVKHWYQLCKEKLREPLPPQYALELLTVYVWEHSNKNQEKVTTAKNFRTFLELVAYYKNLRIYWTWYYDFRHQEVCAYLCRQLKKARPLILDPADPTRNVAGSDLQAWDLLAKEAQTWMQSSCFRNCDMSFVPTWDLSPERQECAFQ</sequence>
<protein>
    <recommendedName>
        <fullName evidence="4">Inactive 2'-5' oligoadenylate synthetase 1C</fullName>
    </recommendedName>
    <alternativeName>
        <fullName evidence="3">2',5'-oligoadenylate synthetase-like 5</fullName>
    </alternativeName>
</protein>
<gene>
    <name evidence="12" type="primary">Oas1c</name>
    <name evidence="3 12" type="synonym">Oasl5</name>
</gene>
<dbReference type="EMBL" id="AB067528">
    <property type="protein sequence ID" value="BAB62296.1"/>
    <property type="molecule type" value="mRNA"/>
</dbReference>
<dbReference type="EMBL" id="AF459815">
    <property type="protein sequence ID" value="AAM47560.1"/>
    <property type="molecule type" value="mRNA"/>
</dbReference>
<dbReference type="EMBL" id="AK028986">
    <property type="protein sequence ID" value="BAC26225.1"/>
    <property type="molecule type" value="mRNA"/>
</dbReference>
<dbReference type="EMBL" id="AK078952">
    <property type="protein sequence ID" value="BAC37475.1"/>
    <property type="molecule type" value="mRNA"/>
</dbReference>
<dbReference type="EMBL" id="AK163253">
    <property type="protein sequence ID" value="BAE37260.1"/>
    <property type="molecule type" value="mRNA"/>
</dbReference>
<dbReference type="EMBL" id="AC115937">
    <property type="status" value="NOT_ANNOTATED_CDS"/>
    <property type="molecule type" value="Genomic_DNA"/>
</dbReference>
<dbReference type="EMBL" id="CH466529">
    <property type="protein sequence ID" value="EDL19749.1"/>
    <property type="molecule type" value="Genomic_DNA"/>
</dbReference>
<dbReference type="EMBL" id="BC108955">
    <property type="protein sequence ID" value="AAI08956.1"/>
    <property type="molecule type" value="mRNA"/>
</dbReference>
<dbReference type="EMBL" id="BC126877">
    <property type="protein sequence ID" value="AAI26878.1"/>
    <property type="molecule type" value="mRNA"/>
</dbReference>
<dbReference type="CCDS" id="CCDS19626.1"/>
<dbReference type="RefSeq" id="NP_291019.1">
    <property type="nucleotide sequence ID" value="NM_033541.4"/>
</dbReference>
<dbReference type="SMR" id="Q924S2"/>
<dbReference type="FunCoup" id="Q924S2">
    <property type="interactions" value="10"/>
</dbReference>
<dbReference type="STRING" id="10090.ENSMUSP00000112584"/>
<dbReference type="PaxDb" id="10090-ENSMUSP00000112584"/>
<dbReference type="ProteomicsDB" id="289955"/>
<dbReference type="DNASU" id="114643"/>
<dbReference type="Ensembl" id="ENSMUST00000117193.8">
    <property type="protein sequence ID" value="ENSMUSP00000112584.2"/>
    <property type="gene ID" value="ENSMUSG00000001166.18"/>
</dbReference>
<dbReference type="GeneID" id="114643"/>
<dbReference type="KEGG" id="mmu:114643"/>
<dbReference type="UCSC" id="uc008zid.1">
    <property type="organism name" value="mouse"/>
</dbReference>
<dbReference type="AGR" id="MGI:2149633"/>
<dbReference type="CTD" id="114643"/>
<dbReference type="MGI" id="MGI:2149633">
    <property type="gene designation" value="Oas1c"/>
</dbReference>
<dbReference type="VEuPathDB" id="HostDB:ENSMUSG00000001166"/>
<dbReference type="eggNOG" id="KOG0001">
    <property type="taxonomic scope" value="Eukaryota"/>
</dbReference>
<dbReference type="GeneTree" id="ENSGT00510000046406"/>
<dbReference type="HOGENOM" id="CLU_040930_0_0_1"/>
<dbReference type="InParanoid" id="Q924S2"/>
<dbReference type="OrthoDB" id="1885901at2759"/>
<dbReference type="PhylomeDB" id="Q924S2"/>
<dbReference type="TreeFam" id="TF329749"/>
<dbReference type="BRENDA" id="2.7.7.84">
    <property type="organism ID" value="3474"/>
</dbReference>
<dbReference type="BioGRID-ORCS" id="114643">
    <property type="hits" value="4 hits in 75 CRISPR screens"/>
</dbReference>
<dbReference type="PRO" id="PR:Q924S2"/>
<dbReference type="Proteomes" id="UP000000589">
    <property type="component" value="Chromosome 5"/>
</dbReference>
<dbReference type="RNAct" id="Q924S2">
    <property type="molecule type" value="protein"/>
</dbReference>
<dbReference type="Bgee" id="ENSMUSG00000001166">
    <property type="expression patterns" value="Expressed in animal zygote and 91 other cell types or tissues"/>
</dbReference>
<dbReference type="ExpressionAtlas" id="Q924S2">
    <property type="expression patterns" value="baseline and differential"/>
</dbReference>
<dbReference type="GO" id="GO:0003725">
    <property type="term" value="F:double-stranded RNA binding"/>
    <property type="evidence" value="ECO:0000314"/>
    <property type="project" value="MGI"/>
</dbReference>
<dbReference type="GO" id="GO:0016779">
    <property type="term" value="F:nucleotidyltransferase activity"/>
    <property type="evidence" value="ECO:0007669"/>
    <property type="project" value="InterPro"/>
</dbReference>
<dbReference type="CDD" id="cd05400">
    <property type="entry name" value="NT_2-5OAS_ClassI-CCAase"/>
    <property type="match status" value="1"/>
</dbReference>
<dbReference type="FunFam" id="1.10.1410.20:FF:000003">
    <property type="entry name" value="2'-5' oligoadenylate synthetase 1E"/>
    <property type="match status" value="1"/>
</dbReference>
<dbReference type="FunFam" id="3.30.460.10:FF:000007">
    <property type="entry name" value="2'-5'-oligoadenylate synthetase 1"/>
    <property type="match status" value="1"/>
</dbReference>
<dbReference type="Gene3D" id="1.10.1410.20">
    <property type="entry name" value="2'-5'-oligoadenylate synthetase 1, domain 2"/>
    <property type="match status" value="1"/>
</dbReference>
<dbReference type="Gene3D" id="3.30.460.10">
    <property type="entry name" value="Beta Polymerase, domain 2"/>
    <property type="match status" value="1"/>
</dbReference>
<dbReference type="InterPro" id="IPR018952">
    <property type="entry name" value="2-5-oligoAdlate_synth_1_dom2/C"/>
</dbReference>
<dbReference type="InterPro" id="IPR006116">
    <property type="entry name" value="NT_2-5OAS_ClassI-CCAase"/>
</dbReference>
<dbReference type="InterPro" id="IPR043519">
    <property type="entry name" value="NT_sf"/>
</dbReference>
<dbReference type="PANTHER" id="PTHR11258:SF17">
    <property type="entry name" value="2'-5' OLIGOADENYLATE SYNTHETASE 1E-RELATED"/>
    <property type="match status" value="1"/>
</dbReference>
<dbReference type="PANTHER" id="PTHR11258">
    <property type="entry name" value="2-5 OLIGOADENYLATE SYNTHETASE"/>
    <property type="match status" value="1"/>
</dbReference>
<dbReference type="Pfam" id="PF10421">
    <property type="entry name" value="OAS1_C"/>
    <property type="match status" value="1"/>
</dbReference>
<dbReference type="SUPFAM" id="SSF81301">
    <property type="entry name" value="Nucleotidyltransferase"/>
    <property type="match status" value="1"/>
</dbReference>
<dbReference type="SUPFAM" id="SSF81631">
    <property type="entry name" value="PAP/OAS1 substrate-binding domain"/>
    <property type="match status" value="1"/>
</dbReference>
<dbReference type="PROSITE" id="PS50152">
    <property type="entry name" value="25A_SYNTH_3"/>
    <property type="match status" value="1"/>
</dbReference>
<feature type="chain" id="PRO_0000440068" description="Inactive 2'-5' oligoadenylate synthetase 1C">
    <location>
        <begin position="1"/>
        <end position="362"/>
    </location>
</feature>
<comment type="function">
    <text evidence="1 2">Does not have 2'-5'-OAS activity, but can bind double-stranded RNA.</text>
</comment>
<comment type="tissue specificity">
    <text evidence="1 2">Expressed at highest level in brain with lesser amounts in spleen, kidney, stomach, liver, intestine, ovary, skin and testis. Not detected in lung, thymus, heart and uterus.</text>
</comment>
<comment type="developmental stage">
    <text evidence="1 2">Expressed in embryonic stem cells and embryonic fibroblasts (PubMed:11418248). Detected 1 week after birth in developing ovary (PubMed:27663720).</text>
</comment>
<comment type="induction">
    <text evidence="1 2">By interferon (IFN) and polyinosinic:polycytidylic acid (poly I:C).</text>
</comment>
<comment type="similarity">
    <text evidence="4">Belongs to the 2-5A synthase family.</text>
</comment>
<accession>Q924S2</accession>
<evidence type="ECO:0000269" key="1">
    <source>
    </source>
</evidence>
<evidence type="ECO:0000269" key="2">
    <source>
    </source>
</evidence>
<evidence type="ECO:0000303" key="3">
    <source>
    </source>
</evidence>
<evidence type="ECO:0000305" key="4"/>
<evidence type="ECO:0000312" key="5">
    <source>
        <dbReference type="EMBL" id="AAI08956.1"/>
    </source>
</evidence>
<evidence type="ECO:0000312" key="6">
    <source>
        <dbReference type="EMBL" id="AAM47560.1"/>
    </source>
</evidence>
<evidence type="ECO:0000312" key="7">
    <source>
        <dbReference type="EMBL" id="BAB62296.1"/>
    </source>
</evidence>
<evidence type="ECO:0000312" key="8">
    <source>
        <dbReference type="EMBL" id="BAC26225.1"/>
    </source>
</evidence>
<evidence type="ECO:0000312" key="9">
    <source>
        <dbReference type="EMBL" id="BAC37475.1"/>
    </source>
</evidence>
<evidence type="ECO:0000312" key="10">
    <source>
        <dbReference type="EMBL" id="BAE37260.1"/>
    </source>
</evidence>
<evidence type="ECO:0000312" key="11">
    <source>
        <dbReference type="EMBL" id="EDL19749.1"/>
    </source>
</evidence>
<evidence type="ECO:0000312" key="12">
    <source>
        <dbReference type="MGI" id="MGI:2149633"/>
    </source>
</evidence>
<evidence type="ECO:0000312" key="13">
    <source>
        <dbReference type="Proteomes" id="UP000000589"/>
    </source>
</evidence>
<reference evidence="7" key="1">
    <citation type="journal article" date="2001" name="Gene">
        <title>Cloning of a novel 2',5'-oligoadenylate synthetase-like molecule, Oasl5 in mice.</title>
        <authorList>
            <person name="Shibata S."/>
            <person name="Kakuta S."/>
            <person name="Hamada K."/>
            <person name="Sokawa Y."/>
            <person name="Iwakura Y."/>
        </authorList>
    </citation>
    <scope>NUCLEOTIDE SEQUENCE [MRNA]</scope>
    <scope>FUNCTION</scope>
    <scope>TISSUE SPECIFICITY</scope>
    <scope>DEVELOPMENTAL STAGE</scope>
    <scope>INDUCTION</scope>
    <source>
        <strain evidence="7">129/SvJ</strain>
    </source>
</reference>
<reference evidence="6" key="2">
    <citation type="journal article" date="2002" name="Proc. Natl. Acad. Sci. U.S.A.">
        <title>Positional cloning of the murine flavivirus resistance gene.</title>
        <authorList>
            <person name="Perelygin A.A."/>
            <person name="Scherbik S.V."/>
            <person name="Zhulin I.B."/>
            <person name="Stockman B.M."/>
            <person name="Li Y."/>
            <person name="Brinton M.A."/>
        </authorList>
    </citation>
    <scope>NUCLEOTIDE SEQUENCE [MRNA]</scope>
    <source>
        <strain evidence="6">C3H/RV</strain>
    </source>
</reference>
<reference evidence="8" key="3">
    <citation type="journal article" date="2005" name="Science">
        <title>The transcriptional landscape of the mammalian genome.</title>
        <authorList>
            <person name="Carninci P."/>
            <person name="Kasukawa T."/>
            <person name="Katayama S."/>
            <person name="Gough J."/>
            <person name="Frith M.C."/>
            <person name="Maeda N."/>
            <person name="Oyama R."/>
            <person name="Ravasi T."/>
            <person name="Lenhard B."/>
            <person name="Wells C."/>
            <person name="Kodzius R."/>
            <person name="Shimokawa K."/>
            <person name="Bajic V.B."/>
            <person name="Brenner S.E."/>
            <person name="Batalov S."/>
            <person name="Forrest A.R."/>
            <person name="Zavolan M."/>
            <person name="Davis M.J."/>
            <person name="Wilming L.G."/>
            <person name="Aidinis V."/>
            <person name="Allen J.E."/>
            <person name="Ambesi-Impiombato A."/>
            <person name="Apweiler R."/>
            <person name="Aturaliya R.N."/>
            <person name="Bailey T.L."/>
            <person name="Bansal M."/>
            <person name="Baxter L."/>
            <person name="Beisel K.W."/>
            <person name="Bersano T."/>
            <person name="Bono H."/>
            <person name="Chalk A.M."/>
            <person name="Chiu K.P."/>
            <person name="Choudhary V."/>
            <person name="Christoffels A."/>
            <person name="Clutterbuck D.R."/>
            <person name="Crowe M.L."/>
            <person name="Dalla E."/>
            <person name="Dalrymple B.P."/>
            <person name="de Bono B."/>
            <person name="Della Gatta G."/>
            <person name="di Bernardo D."/>
            <person name="Down T."/>
            <person name="Engstrom P."/>
            <person name="Fagiolini M."/>
            <person name="Faulkner G."/>
            <person name="Fletcher C.F."/>
            <person name="Fukushima T."/>
            <person name="Furuno M."/>
            <person name="Futaki S."/>
            <person name="Gariboldi M."/>
            <person name="Georgii-Hemming P."/>
            <person name="Gingeras T.R."/>
            <person name="Gojobori T."/>
            <person name="Green R.E."/>
            <person name="Gustincich S."/>
            <person name="Harbers M."/>
            <person name="Hayashi Y."/>
            <person name="Hensch T.K."/>
            <person name="Hirokawa N."/>
            <person name="Hill D."/>
            <person name="Huminiecki L."/>
            <person name="Iacono M."/>
            <person name="Ikeo K."/>
            <person name="Iwama A."/>
            <person name="Ishikawa T."/>
            <person name="Jakt M."/>
            <person name="Kanapin A."/>
            <person name="Katoh M."/>
            <person name="Kawasawa Y."/>
            <person name="Kelso J."/>
            <person name="Kitamura H."/>
            <person name="Kitano H."/>
            <person name="Kollias G."/>
            <person name="Krishnan S.P."/>
            <person name="Kruger A."/>
            <person name="Kummerfeld S.K."/>
            <person name="Kurochkin I.V."/>
            <person name="Lareau L.F."/>
            <person name="Lazarevic D."/>
            <person name="Lipovich L."/>
            <person name="Liu J."/>
            <person name="Liuni S."/>
            <person name="McWilliam S."/>
            <person name="Madan Babu M."/>
            <person name="Madera M."/>
            <person name="Marchionni L."/>
            <person name="Matsuda H."/>
            <person name="Matsuzawa S."/>
            <person name="Miki H."/>
            <person name="Mignone F."/>
            <person name="Miyake S."/>
            <person name="Morris K."/>
            <person name="Mottagui-Tabar S."/>
            <person name="Mulder N."/>
            <person name="Nakano N."/>
            <person name="Nakauchi H."/>
            <person name="Ng P."/>
            <person name="Nilsson R."/>
            <person name="Nishiguchi S."/>
            <person name="Nishikawa S."/>
            <person name="Nori F."/>
            <person name="Ohara O."/>
            <person name="Okazaki Y."/>
            <person name="Orlando V."/>
            <person name="Pang K.C."/>
            <person name="Pavan W.J."/>
            <person name="Pavesi G."/>
            <person name="Pesole G."/>
            <person name="Petrovsky N."/>
            <person name="Piazza S."/>
            <person name="Reed J."/>
            <person name="Reid J.F."/>
            <person name="Ring B.Z."/>
            <person name="Ringwald M."/>
            <person name="Rost B."/>
            <person name="Ruan Y."/>
            <person name="Salzberg S.L."/>
            <person name="Sandelin A."/>
            <person name="Schneider C."/>
            <person name="Schoenbach C."/>
            <person name="Sekiguchi K."/>
            <person name="Semple C.A."/>
            <person name="Seno S."/>
            <person name="Sessa L."/>
            <person name="Sheng Y."/>
            <person name="Shibata Y."/>
            <person name="Shimada H."/>
            <person name="Shimada K."/>
            <person name="Silva D."/>
            <person name="Sinclair B."/>
            <person name="Sperling S."/>
            <person name="Stupka E."/>
            <person name="Sugiura K."/>
            <person name="Sultana R."/>
            <person name="Takenaka Y."/>
            <person name="Taki K."/>
            <person name="Tammoja K."/>
            <person name="Tan S.L."/>
            <person name="Tang S."/>
            <person name="Taylor M.S."/>
            <person name="Tegner J."/>
            <person name="Teichmann S.A."/>
            <person name="Ueda H.R."/>
            <person name="van Nimwegen E."/>
            <person name="Verardo R."/>
            <person name="Wei C.L."/>
            <person name="Yagi K."/>
            <person name="Yamanishi H."/>
            <person name="Zabarovsky E."/>
            <person name="Zhu S."/>
            <person name="Zimmer A."/>
            <person name="Hide W."/>
            <person name="Bult C."/>
            <person name="Grimmond S.M."/>
            <person name="Teasdale R.D."/>
            <person name="Liu E.T."/>
            <person name="Brusic V."/>
            <person name="Quackenbush J."/>
            <person name="Wahlestedt C."/>
            <person name="Mattick J.S."/>
            <person name="Hume D.A."/>
            <person name="Kai C."/>
            <person name="Sasaki D."/>
            <person name="Tomaru Y."/>
            <person name="Fukuda S."/>
            <person name="Kanamori-Katayama M."/>
            <person name="Suzuki M."/>
            <person name="Aoki J."/>
            <person name="Arakawa T."/>
            <person name="Iida J."/>
            <person name="Imamura K."/>
            <person name="Itoh M."/>
            <person name="Kato T."/>
            <person name="Kawaji H."/>
            <person name="Kawagashira N."/>
            <person name="Kawashima T."/>
            <person name="Kojima M."/>
            <person name="Kondo S."/>
            <person name="Konno H."/>
            <person name="Nakano K."/>
            <person name="Ninomiya N."/>
            <person name="Nishio T."/>
            <person name="Okada M."/>
            <person name="Plessy C."/>
            <person name="Shibata K."/>
            <person name="Shiraki T."/>
            <person name="Suzuki S."/>
            <person name="Tagami M."/>
            <person name="Waki K."/>
            <person name="Watahiki A."/>
            <person name="Okamura-Oho Y."/>
            <person name="Suzuki H."/>
            <person name="Kawai J."/>
            <person name="Hayashizaki Y."/>
        </authorList>
    </citation>
    <scope>NUCLEOTIDE SEQUENCE [LARGE SCALE MRNA]</scope>
    <source>
        <strain evidence="8">C57BL/6J</strain>
        <tissue evidence="9">Cecum</tissue>
        <tissue evidence="10">Egg</tissue>
        <tissue evidence="8">Skin</tissue>
    </source>
</reference>
<reference evidence="13" key="4">
    <citation type="journal article" date="2009" name="PLoS Biol.">
        <title>Lineage-specific biology revealed by a finished genome assembly of the mouse.</title>
        <authorList>
            <person name="Church D.M."/>
            <person name="Goodstadt L."/>
            <person name="Hillier L.W."/>
            <person name="Zody M.C."/>
            <person name="Goldstein S."/>
            <person name="She X."/>
            <person name="Bult C.J."/>
            <person name="Agarwala R."/>
            <person name="Cherry J.L."/>
            <person name="DiCuccio M."/>
            <person name="Hlavina W."/>
            <person name="Kapustin Y."/>
            <person name="Meric P."/>
            <person name="Maglott D."/>
            <person name="Birtle Z."/>
            <person name="Marques A.C."/>
            <person name="Graves T."/>
            <person name="Zhou S."/>
            <person name="Teague B."/>
            <person name="Potamousis K."/>
            <person name="Churas C."/>
            <person name="Place M."/>
            <person name="Herschleb J."/>
            <person name="Runnheim R."/>
            <person name="Forrest D."/>
            <person name="Amos-Landgraf J."/>
            <person name="Schwartz D.C."/>
            <person name="Cheng Z."/>
            <person name="Lindblad-Toh K."/>
            <person name="Eichler E.E."/>
            <person name="Ponting C.P."/>
        </authorList>
    </citation>
    <scope>NUCLEOTIDE SEQUENCE [LARGE SCALE GENOMIC DNA]</scope>
    <source>
        <strain evidence="13">C57BL/6J</strain>
    </source>
</reference>
<reference evidence="11" key="5">
    <citation type="submission" date="2005-09" db="EMBL/GenBank/DDBJ databases">
        <authorList>
            <person name="Mural R.J."/>
            <person name="Adams M.D."/>
            <person name="Myers E.W."/>
            <person name="Smith H.O."/>
            <person name="Venter J.C."/>
        </authorList>
    </citation>
    <scope>NUCLEOTIDE SEQUENCE [LARGE SCALE GENOMIC DNA]</scope>
</reference>
<reference evidence="5" key="6">
    <citation type="journal article" date="2004" name="Genome Res.">
        <title>The status, quality, and expansion of the NIH full-length cDNA project: the Mammalian Gene Collection (MGC).</title>
        <authorList>
            <consortium name="The MGC Project Team"/>
        </authorList>
    </citation>
    <scope>NUCLEOTIDE SEQUENCE [LARGE SCALE MRNA]</scope>
</reference>
<reference evidence="4" key="7">
    <citation type="journal article" date="2016" name="Infect. Genet. Evol.">
        <title>The role of mouse 2',5'-oligoadenylate synthetase 1 paralogs.</title>
        <authorList>
            <person name="Elkhateeb E."/>
            <person name="Tag-El-Din-Hassan H.T."/>
            <person name="Sasaki N."/>
            <person name="Torigoe D."/>
            <person name="Morimatsu M."/>
            <person name="Agui T."/>
        </authorList>
    </citation>
    <scope>FUNCTION</scope>
    <scope>TISSUE SPECIFICITY</scope>
    <scope>DEVELOPMENTAL STAGE</scope>
    <scope>INDUCTION</scope>
</reference>
<proteinExistence type="evidence at transcript level"/>
<keyword id="KW-1185">Reference proteome</keyword>
<keyword id="KW-0694">RNA-binding</keyword>